<dbReference type="EMBL" id="CP000489">
    <property type="protein sequence ID" value="ABL68985.1"/>
    <property type="molecule type" value="Genomic_DNA"/>
</dbReference>
<dbReference type="RefSeq" id="WP_011747213.1">
    <property type="nucleotide sequence ID" value="NC_008686.1"/>
</dbReference>
<dbReference type="STRING" id="318586.Pden_0874"/>
<dbReference type="EnsemblBacteria" id="ABL68985">
    <property type="protein sequence ID" value="ABL68985"/>
    <property type="gene ID" value="Pden_0874"/>
</dbReference>
<dbReference type="GeneID" id="93452098"/>
<dbReference type="KEGG" id="pde:Pden_0874"/>
<dbReference type="eggNOG" id="COG0759">
    <property type="taxonomic scope" value="Bacteria"/>
</dbReference>
<dbReference type="HOGENOM" id="CLU_144811_5_3_5"/>
<dbReference type="OrthoDB" id="9801753at2"/>
<dbReference type="Proteomes" id="UP000000361">
    <property type="component" value="Chromosome 1"/>
</dbReference>
<dbReference type="GO" id="GO:0005886">
    <property type="term" value="C:plasma membrane"/>
    <property type="evidence" value="ECO:0007669"/>
    <property type="project" value="UniProtKB-SubCell"/>
</dbReference>
<dbReference type="HAMAP" id="MF_00386">
    <property type="entry name" value="UPF0161_YidD"/>
    <property type="match status" value="1"/>
</dbReference>
<dbReference type="InterPro" id="IPR002696">
    <property type="entry name" value="Membr_insert_effic_factor_YidD"/>
</dbReference>
<dbReference type="NCBIfam" id="TIGR00278">
    <property type="entry name" value="membrane protein insertion efficiency factor YidD"/>
    <property type="match status" value="1"/>
</dbReference>
<dbReference type="PANTHER" id="PTHR33383">
    <property type="entry name" value="MEMBRANE PROTEIN INSERTION EFFICIENCY FACTOR-RELATED"/>
    <property type="match status" value="1"/>
</dbReference>
<dbReference type="PANTHER" id="PTHR33383:SF1">
    <property type="entry name" value="MEMBRANE PROTEIN INSERTION EFFICIENCY FACTOR-RELATED"/>
    <property type="match status" value="1"/>
</dbReference>
<dbReference type="Pfam" id="PF01809">
    <property type="entry name" value="YidD"/>
    <property type="match status" value="1"/>
</dbReference>
<dbReference type="SMART" id="SM01234">
    <property type="entry name" value="Haemolytic"/>
    <property type="match status" value="1"/>
</dbReference>
<sequence>MSPFAHLLALPVRAYRLVASPWVGHGCRFQPTCSAYALEALERHGAAKGGWLAARRVCRCHPWGGHGFDPVPGSEAPRQD</sequence>
<gene>
    <name type="ordered locus">Pden_0874</name>
</gene>
<feature type="chain" id="PRO_1000013107" description="Putative membrane protein insertion efficiency factor">
    <location>
        <begin position="1"/>
        <end position="80"/>
    </location>
</feature>
<proteinExistence type="inferred from homology"/>
<evidence type="ECO:0000255" key="1">
    <source>
        <dbReference type="HAMAP-Rule" id="MF_00386"/>
    </source>
</evidence>
<keyword id="KW-0997">Cell inner membrane</keyword>
<keyword id="KW-1003">Cell membrane</keyword>
<keyword id="KW-0472">Membrane</keyword>
<keyword id="KW-1185">Reference proteome</keyword>
<reference key="1">
    <citation type="submission" date="2006-12" db="EMBL/GenBank/DDBJ databases">
        <title>Complete sequence of chromosome 1 of Paracoccus denitrificans PD1222.</title>
        <authorList>
            <person name="Copeland A."/>
            <person name="Lucas S."/>
            <person name="Lapidus A."/>
            <person name="Barry K."/>
            <person name="Detter J.C."/>
            <person name="Glavina del Rio T."/>
            <person name="Hammon N."/>
            <person name="Israni S."/>
            <person name="Dalin E."/>
            <person name="Tice H."/>
            <person name="Pitluck S."/>
            <person name="Munk A.C."/>
            <person name="Brettin T."/>
            <person name="Bruce D."/>
            <person name="Han C."/>
            <person name="Tapia R."/>
            <person name="Gilna P."/>
            <person name="Schmutz J."/>
            <person name="Larimer F."/>
            <person name="Land M."/>
            <person name="Hauser L."/>
            <person name="Kyrpides N."/>
            <person name="Lykidis A."/>
            <person name="Spiro S."/>
            <person name="Richardson D.J."/>
            <person name="Moir J.W.B."/>
            <person name="Ferguson S.J."/>
            <person name="van Spanning R.J.M."/>
            <person name="Richardson P."/>
        </authorList>
    </citation>
    <scope>NUCLEOTIDE SEQUENCE [LARGE SCALE GENOMIC DNA]</scope>
    <source>
        <strain>Pd 1222</strain>
    </source>
</reference>
<accession>A1B0E1</accession>
<comment type="function">
    <text evidence="1">Could be involved in insertion of integral membrane proteins into the membrane.</text>
</comment>
<comment type="subcellular location">
    <subcellularLocation>
        <location evidence="1">Cell inner membrane</location>
        <topology evidence="1">Peripheral membrane protein</topology>
        <orientation evidence="1">Cytoplasmic side</orientation>
    </subcellularLocation>
</comment>
<comment type="similarity">
    <text evidence="1">Belongs to the UPF0161 family.</text>
</comment>
<organism>
    <name type="scientific">Paracoccus denitrificans (strain Pd 1222)</name>
    <dbReference type="NCBI Taxonomy" id="318586"/>
    <lineage>
        <taxon>Bacteria</taxon>
        <taxon>Pseudomonadati</taxon>
        <taxon>Pseudomonadota</taxon>
        <taxon>Alphaproteobacteria</taxon>
        <taxon>Rhodobacterales</taxon>
        <taxon>Paracoccaceae</taxon>
        <taxon>Paracoccus</taxon>
    </lineage>
</organism>
<name>YIDD_PARDP</name>
<protein>
    <recommendedName>
        <fullName evidence="1">Putative membrane protein insertion efficiency factor</fullName>
    </recommendedName>
</protein>